<comment type="function">
    <text evidence="1">Catalyzes the decarboxylative condensation of pimeloyl-[acyl-carrier protein] and L-alanine to produce 8-amino-7-oxononanoate (AON), [acyl-carrier protein], and carbon dioxide.</text>
</comment>
<comment type="catalytic activity">
    <reaction evidence="1">
        <text>6-carboxyhexanoyl-[ACP] + L-alanine + H(+) = (8S)-8-amino-7-oxononanoate + holo-[ACP] + CO2</text>
        <dbReference type="Rhea" id="RHEA:42288"/>
        <dbReference type="Rhea" id="RHEA-COMP:9685"/>
        <dbReference type="Rhea" id="RHEA-COMP:9955"/>
        <dbReference type="ChEBI" id="CHEBI:15378"/>
        <dbReference type="ChEBI" id="CHEBI:16526"/>
        <dbReference type="ChEBI" id="CHEBI:57972"/>
        <dbReference type="ChEBI" id="CHEBI:64479"/>
        <dbReference type="ChEBI" id="CHEBI:78846"/>
        <dbReference type="ChEBI" id="CHEBI:149468"/>
        <dbReference type="EC" id="2.3.1.47"/>
    </reaction>
</comment>
<comment type="cofactor">
    <cofactor evidence="1">
        <name>pyridoxal 5'-phosphate</name>
        <dbReference type="ChEBI" id="CHEBI:597326"/>
    </cofactor>
</comment>
<comment type="pathway">
    <text evidence="1">Cofactor biosynthesis; biotin biosynthesis.</text>
</comment>
<comment type="subunit">
    <text evidence="1">Homodimer.</text>
</comment>
<comment type="similarity">
    <text evidence="1">Belongs to the class-II pyridoxal-phosphate-dependent aminotransferase family. BioF subfamily.</text>
</comment>
<sequence>MSWQEKINAALDARRAADALRRRYPVAQGAGRWLVADDRQYLNFSSNDYLGLSHHPQIIRAWQQGAEQFGVGSGGSGHVSGYSVAHQALEEELAEWLGYSRALLFISGFAANQAVIAAMMAKEDRIVADRLSHASLLEAASLSPSQLRRFAHNDVTHLARLLASPCPGQQLVVTEGVFSMDGDSAPLAEIQQVTQQHNGWLMVDDAHGTGVIGEQGRGSCWLQKVKPELLVVTFGKGFGVSGAAVLCSSTVADYLLQFARHLIYSTSMPPAQAQALRASLAVIRRDEGDARREKLVSLIARFRAGVQDLPFTLADSCSAIQPLIVGDNSRALQLAEKLRQQGCWVTAIRPPTVPAGTARLRLTLTAAHEMQDIDRLLEVLHGNG</sequence>
<organism>
    <name type="scientific">Escherichia coli (strain SE11)</name>
    <dbReference type="NCBI Taxonomy" id="409438"/>
    <lineage>
        <taxon>Bacteria</taxon>
        <taxon>Pseudomonadati</taxon>
        <taxon>Pseudomonadota</taxon>
        <taxon>Gammaproteobacteria</taxon>
        <taxon>Enterobacterales</taxon>
        <taxon>Enterobacteriaceae</taxon>
        <taxon>Escherichia</taxon>
    </lineage>
</organism>
<accession>B6I7T0</accession>
<keyword id="KW-0093">Biotin biosynthesis</keyword>
<keyword id="KW-0663">Pyridoxal phosphate</keyword>
<keyword id="KW-0808">Transferase</keyword>
<name>BIOF_ECOSE</name>
<reference key="1">
    <citation type="journal article" date="2008" name="DNA Res.">
        <title>Complete genome sequence and comparative analysis of the wild-type commensal Escherichia coli strain SE11 isolated from a healthy adult.</title>
        <authorList>
            <person name="Oshima K."/>
            <person name="Toh H."/>
            <person name="Ogura Y."/>
            <person name="Sasamoto H."/>
            <person name="Morita H."/>
            <person name="Park S.-H."/>
            <person name="Ooka T."/>
            <person name="Iyoda S."/>
            <person name="Taylor T.D."/>
            <person name="Hayashi T."/>
            <person name="Itoh K."/>
            <person name="Hattori M."/>
        </authorList>
    </citation>
    <scope>NUCLEOTIDE SEQUENCE [LARGE SCALE GENOMIC DNA]</scope>
    <source>
        <strain>SE11</strain>
    </source>
</reference>
<gene>
    <name evidence="1" type="primary">bioF</name>
    <name type="ordered locus">ECSE_0829</name>
</gene>
<dbReference type="EC" id="2.3.1.47" evidence="1"/>
<dbReference type="EMBL" id="AP009240">
    <property type="protein sequence ID" value="BAG76353.1"/>
    <property type="molecule type" value="Genomic_DNA"/>
</dbReference>
<dbReference type="RefSeq" id="WP_000118833.1">
    <property type="nucleotide sequence ID" value="NC_011415.1"/>
</dbReference>
<dbReference type="SMR" id="B6I7T0"/>
<dbReference type="KEGG" id="ecy:ECSE_0829"/>
<dbReference type="HOGENOM" id="CLU_015846_11_2_6"/>
<dbReference type="UniPathway" id="UPA00078"/>
<dbReference type="Proteomes" id="UP000008199">
    <property type="component" value="Chromosome"/>
</dbReference>
<dbReference type="GO" id="GO:0008710">
    <property type="term" value="F:8-amino-7-oxononanoate synthase activity"/>
    <property type="evidence" value="ECO:0007669"/>
    <property type="project" value="UniProtKB-UniRule"/>
</dbReference>
<dbReference type="GO" id="GO:0030170">
    <property type="term" value="F:pyridoxal phosphate binding"/>
    <property type="evidence" value="ECO:0007669"/>
    <property type="project" value="UniProtKB-UniRule"/>
</dbReference>
<dbReference type="GO" id="GO:0009102">
    <property type="term" value="P:biotin biosynthetic process"/>
    <property type="evidence" value="ECO:0007669"/>
    <property type="project" value="UniProtKB-UniRule"/>
</dbReference>
<dbReference type="CDD" id="cd06454">
    <property type="entry name" value="KBL_like"/>
    <property type="match status" value="1"/>
</dbReference>
<dbReference type="FunFam" id="3.40.640.10:FF:000095">
    <property type="entry name" value="8-amino-7-oxononanoate synthase"/>
    <property type="match status" value="1"/>
</dbReference>
<dbReference type="FunFam" id="3.90.1150.10:FF:000036">
    <property type="entry name" value="8-amino-7-oxononanoate synthase"/>
    <property type="match status" value="1"/>
</dbReference>
<dbReference type="Gene3D" id="3.90.1150.10">
    <property type="entry name" value="Aspartate Aminotransferase, domain 1"/>
    <property type="match status" value="1"/>
</dbReference>
<dbReference type="Gene3D" id="3.40.640.10">
    <property type="entry name" value="Type I PLP-dependent aspartate aminotransferase-like (Major domain)"/>
    <property type="match status" value="1"/>
</dbReference>
<dbReference type="HAMAP" id="MF_01693">
    <property type="entry name" value="BioF_aminotrans_2"/>
    <property type="match status" value="1"/>
</dbReference>
<dbReference type="InterPro" id="IPR001917">
    <property type="entry name" value="Aminotrans_II_pyridoxalP_BS"/>
</dbReference>
<dbReference type="InterPro" id="IPR004839">
    <property type="entry name" value="Aminotransferase_I/II_large"/>
</dbReference>
<dbReference type="InterPro" id="IPR050087">
    <property type="entry name" value="AON_synthase_class-II"/>
</dbReference>
<dbReference type="InterPro" id="IPR004723">
    <property type="entry name" value="AONS_Archaea/Proteobacteria"/>
</dbReference>
<dbReference type="InterPro" id="IPR022834">
    <property type="entry name" value="AONS_Proteobacteria"/>
</dbReference>
<dbReference type="InterPro" id="IPR015424">
    <property type="entry name" value="PyrdxlP-dep_Trfase"/>
</dbReference>
<dbReference type="InterPro" id="IPR015421">
    <property type="entry name" value="PyrdxlP-dep_Trfase_major"/>
</dbReference>
<dbReference type="InterPro" id="IPR015422">
    <property type="entry name" value="PyrdxlP-dep_Trfase_small"/>
</dbReference>
<dbReference type="NCBIfam" id="TIGR00858">
    <property type="entry name" value="bioF"/>
    <property type="match status" value="1"/>
</dbReference>
<dbReference type="PANTHER" id="PTHR13693:SF100">
    <property type="entry name" value="8-AMINO-7-OXONONANOATE SYNTHASE"/>
    <property type="match status" value="1"/>
</dbReference>
<dbReference type="PANTHER" id="PTHR13693">
    <property type="entry name" value="CLASS II AMINOTRANSFERASE/8-AMINO-7-OXONONANOATE SYNTHASE"/>
    <property type="match status" value="1"/>
</dbReference>
<dbReference type="Pfam" id="PF00155">
    <property type="entry name" value="Aminotran_1_2"/>
    <property type="match status" value="1"/>
</dbReference>
<dbReference type="SUPFAM" id="SSF53383">
    <property type="entry name" value="PLP-dependent transferases"/>
    <property type="match status" value="1"/>
</dbReference>
<dbReference type="PROSITE" id="PS00599">
    <property type="entry name" value="AA_TRANSFER_CLASS_2"/>
    <property type="match status" value="1"/>
</dbReference>
<feature type="chain" id="PRO_0000380983" description="8-amino-7-oxononanoate synthase">
    <location>
        <begin position="1"/>
        <end position="384"/>
    </location>
</feature>
<feature type="binding site" evidence="1">
    <location>
        <position position="21"/>
    </location>
    <ligand>
        <name>substrate</name>
    </ligand>
</feature>
<feature type="binding site" evidence="1">
    <location>
        <begin position="108"/>
        <end position="109"/>
    </location>
    <ligand>
        <name>pyridoxal 5'-phosphate</name>
        <dbReference type="ChEBI" id="CHEBI:597326"/>
    </ligand>
</feature>
<feature type="binding site" evidence="1">
    <location>
        <position position="133"/>
    </location>
    <ligand>
        <name>substrate</name>
    </ligand>
</feature>
<feature type="binding site" evidence="1">
    <location>
        <position position="179"/>
    </location>
    <ligand>
        <name>pyridoxal 5'-phosphate</name>
        <dbReference type="ChEBI" id="CHEBI:597326"/>
    </ligand>
</feature>
<feature type="binding site" evidence="1">
    <location>
        <position position="207"/>
    </location>
    <ligand>
        <name>pyridoxal 5'-phosphate</name>
        <dbReference type="ChEBI" id="CHEBI:597326"/>
    </ligand>
</feature>
<feature type="binding site" evidence="1">
    <location>
        <position position="233"/>
    </location>
    <ligand>
        <name>pyridoxal 5'-phosphate</name>
        <dbReference type="ChEBI" id="CHEBI:597326"/>
    </ligand>
</feature>
<feature type="binding site" evidence="1">
    <location>
        <position position="352"/>
    </location>
    <ligand>
        <name>substrate</name>
    </ligand>
</feature>
<feature type="modified residue" description="N6-(pyridoxal phosphate)lysine" evidence="1">
    <location>
        <position position="236"/>
    </location>
</feature>
<proteinExistence type="inferred from homology"/>
<evidence type="ECO:0000255" key="1">
    <source>
        <dbReference type="HAMAP-Rule" id="MF_01693"/>
    </source>
</evidence>
<protein>
    <recommendedName>
        <fullName evidence="1">8-amino-7-oxononanoate synthase</fullName>
        <shortName evidence="1">AONS</shortName>
        <ecNumber evidence="1">2.3.1.47</ecNumber>
    </recommendedName>
    <alternativeName>
        <fullName evidence="1">7-keto-8-amino-pelargonic acid synthase</fullName>
        <shortName evidence="1">7-KAP synthase</shortName>
        <shortName evidence="1">KAPA synthase</shortName>
    </alternativeName>
    <alternativeName>
        <fullName evidence="1">8-amino-7-ketopelargonate synthase</fullName>
    </alternativeName>
</protein>